<protein>
    <recommendedName>
        <fullName evidence="7">Acyl-CoA dehydrogenase AFT10-1</fullName>
        <ecNumber evidence="9">1.-.-.-</ecNumber>
    </recommendedName>
    <alternativeName>
        <fullName evidence="7">AF-toxin biosynthesis protein 10-1</fullName>
    </alternativeName>
</protein>
<organism>
    <name type="scientific">Alternaria alternata</name>
    <name type="common">Alternaria rot fungus</name>
    <name type="synonym">Torula alternata</name>
    <dbReference type="NCBI Taxonomy" id="5599"/>
    <lineage>
        <taxon>Eukaryota</taxon>
        <taxon>Fungi</taxon>
        <taxon>Dikarya</taxon>
        <taxon>Ascomycota</taxon>
        <taxon>Pezizomycotina</taxon>
        <taxon>Dothideomycetes</taxon>
        <taxon>Pleosporomycetidae</taxon>
        <taxon>Pleosporales</taxon>
        <taxon>Pleosporineae</taxon>
        <taxon>Pleosporaceae</taxon>
        <taxon>Alternaria</taxon>
        <taxon>Alternaria sect. Alternaria</taxon>
        <taxon>Alternaria alternata complex</taxon>
    </lineage>
</organism>
<accession>Q50LG2</accession>
<name>AF101_ALTAL</name>
<gene>
    <name evidence="7" type="primary">AFT10-1</name>
</gene>
<proteinExistence type="inferred from homology"/>
<sequence>MSYFFGSTVPFAEPLWYSRPENFRYNESHRRLRESVRGYIEAEIMPFCTQWEADGEVPSHVLKRHAALGYAAALINPSAVKEHMHDVRLPGDVPPREWDEFHGLIVADEVARCGSLGVLWALGCGTAIACPILVNYGTEEQKAKFLPPVIHGESRFCLGITEPEVGSDIANLVTRAEQEGNYFIVNGTKKWVTNGTFADYCIAAVRTGQAGRTGISLLNIPLDVAGVSREKIESSGVASGGTASITFDNVQVPVENLLGEKNKGFYMLMSSFDHHRSWIAANCLRLARVCLEDAYQYALTRQTFGKPLINHQTIRLKLANIGIQITSSYALLESLTEMRQNLSVKMGQVHRGIGGLCAITKVAAARTFELAVRESQQIMGASAYTRTGPGLRVERLSRDMRVLVIGGGSEEILSEMSVVQEQKDLNRCKSCP</sequence>
<comment type="function">
    <text evidence="2 3 4 5 6">Acyl-CoA dehydrogenase; part of the gene clusters that mediate the biosynthesis of the host-selective toxins (HSTs) AF-toxins responsible for Alternaria black spot of strawberry disease by the strawberry pathotype (Ref.1). AF-toxin I and III are valine derivatives of 2,3-dyhydroxy-isovaleric acid and 2-hydroxy-isovaleric acid respectively, while AF II is an isoleucine derivative of 2-hydroxy-valeric acid (PubMed:15066029, PubMed:22846083, Ref.1). These derivatives are bound to a 9,10-epoxy-8-hydroxy-9-methyl-decatrienoic acid (EDA) moiety (PubMed:15066029, PubMed:22846083, Ref.1). On cellular level, AF-toxins affect plasma membrane of susceptible cells and cause a sudden increase in loss of K(+) after a few minutes of toxin treatment (PubMed:22846083). The aldo-keto reductase AFTS1 catalyzes the conversion of 2-keto-isovaleric acid (2-KIV) to 2-hydroxy-isovaleric acid (2-HIV) by reduction of its ketone to an alcohol (PubMed:15066029). The acyl-CoA ligase AFT1, the hydrolase AFT2 and the enoyl-CoA hydratases AFT3 and AFT6, but also the polyketide synthase AFT9, the acyl-CoA dehydrogenase AFT10, the cytochrome P450 monooxygenase AFT11 and the oxidoreductase AFT12 are all involved in the biosynthesis of the AK-, AF- and ACT-toxin common EDA structural moiety (PubMed:12019223, PubMed:18986255, Ref.1). The exact function of each enzyme, and of additional enzymes identified within the AF-toxin clusters have still to be determined (PubMed:12019223, PubMed:18986255, Ref.1).</text>
</comment>
<comment type="cofactor">
    <cofactor evidence="1">
        <name>FAD</name>
        <dbReference type="ChEBI" id="CHEBI:57692"/>
    </cofactor>
</comment>
<comment type="pathway">
    <text evidence="5">Mycotoxin biosynthesis.</text>
</comment>
<comment type="disruption phenotype">
    <text evidence="5">Reduces the production of AF-toxin and pathogenicity.</text>
</comment>
<comment type="miscellaneous">
    <text evidence="2">Gene clusters encoding host-selective toxins (HSTs) are localized on conditionally dispensable chromosomes (CDCs), also called supernumerary chromosomes, where they are present in multiple copies (PubMed:12019223). The CDCs are not essential for saprophytic growth but controls host-selective pathogenicity (PubMed:12019223).</text>
</comment>
<comment type="similarity">
    <text evidence="8">Belongs to the acyl-CoA dehydrogenase family.</text>
</comment>
<dbReference type="EC" id="1.-.-.-" evidence="9"/>
<dbReference type="EMBL" id="AB179766">
    <property type="protein sequence ID" value="BAD97695.1"/>
    <property type="molecule type" value="Genomic_DNA"/>
</dbReference>
<dbReference type="SMR" id="Q50LG2"/>
<dbReference type="VEuPathDB" id="FungiDB:CC77DRAFT_38276"/>
<dbReference type="GO" id="GO:0005737">
    <property type="term" value="C:cytoplasm"/>
    <property type="evidence" value="ECO:0007669"/>
    <property type="project" value="TreeGrafter"/>
</dbReference>
<dbReference type="GO" id="GO:0003995">
    <property type="term" value="F:acyl-CoA dehydrogenase activity"/>
    <property type="evidence" value="ECO:0007669"/>
    <property type="project" value="TreeGrafter"/>
</dbReference>
<dbReference type="GO" id="GO:0050660">
    <property type="term" value="F:flavin adenine dinucleotide binding"/>
    <property type="evidence" value="ECO:0007669"/>
    <property type="project" value="InterPro"/>
</dbReference>
<dbReference type="GO" id="GO:0033539">
    <property type="term" value="P:fatty acid beta-oxidation using acyl-CoA dehydrogenase"/>
    <property type="evidence" value="ECO:0007669"/>
    <property type="project" value="TreeGrafter"/>
</dbReference>
<dbReference type="Gene3D" id="1.10.540.10">
    <property type="entry name" value="Acyl-CoA dehydrogenase/oxidase, N-terminal domain"/>
    <property type="match status" value="1"/>
</dbReference>
<dbReference type="Gene3D" id="2.40.110.10">
    <property type="entry name" value="Butyryl-CoA Dehydrogenase, subunit A, domain 2"/>
    <property type="match status" value="1"/>
</dbReference>
<dbReference type="Gene3D" id="1.20.140.10">
    <property type="entry name" value="Butyryl-CoA Dehydrogenase, subunit A, domain 3"/>
    <property type="match status" value="1"/>
</dbReference>
<dbReference type="InterPro" id="IPR050741">
    <property type="entry name" value="Acyl-CoA_dehydrogenase"/>
</dbReference>
<dbReference type="InterPro" id="IPR006091">
    <property type="entry name" value="Acyl-CoA_Oxase/DH_mid-dom"/>
</dbReference>
<dbReference type="InterPro" id="IPR046373">
    <property type="entry name" value="Acyl-CoA_Oxase/DH_mid-dom_sf"/>
</dbReference>
<dbReference type="InterPro" id="IPR036250">
    <property type="entry name" value="AcylCo_DH-like_C"/>
</dbReference>
<dbReference type="InterPro" id="IPR009075">
    <property type="entry name" value="AcylCo_DH/oxidase_C"/>
</dbReference>
<dbReference type="InterPro" id="IPR013786">
    <property type="entry name" value="AcylCoA_DH/ox_N"/>
</dbReference>
<dbReference type="InterPro" id="IPR037069">
    <property type="entry name" value="AcylCoA_DH/ox_N_sf"/>
</dbReference>
<dbReference type="InterPro" id="IPR009100">
    <property type="entry name" value="AcylCoA_DH/oxidase_NM_dom_sf"/>
</dbReference>
<dbReference type="PANTHER" id="PTHR48083:SF17">
    <property type="entry name" value="ACYL-COA DEHYDROGENASE (AFU_ORTHOLOGUE AFUA_2G16630)-RELATED"/>
    <property type="match status" value="1"/>
</dbReference>
<dbReference type="PANTHER" id="PTHR48083">
    <property type="entry name" value="MEDIUM-CHAIN SPECIFIC ACYL-COA DEHYDROGENASE, MITOCHONDRIAL-RELATED"/>
    <property type="match status" value="1"/>
</dbReference>
<dbReference type="Pfam" id="PF00441">
    <property type="entry name" value="Acyl-CoA_dh_1"/>
    <property type="match status" value="1"/>
</dbReference>
<dbReference type="Pfam" id="PF02770">
    <property type="entry name" value="Acyl-CoA_dh_M"/>
    <property type="match status" value="1"/>
</dbReference>
<dbReference type="Pfam" id="PF02771">
    <property type="entry name" value="Acyl-CoA_dh_N"/>
    <property type="match status" value="1"/>
</dbReference>
<dbReference type="SUPFAM" id="SSF47203">
    <property type="entry name" value="Acyl-CoA dehydrogenase C-terminal domain-like"/>
    <property type="match status" value="1"/>
</dbReference>
<dbReference type="SUPFAM" id="SSF56645">
    <property type="entry name" value="Acyl-CoA dehydrogenase NM domain-like"/>
    <property type="match status" value="1"/>
</dbReference>
<feature type="chain" id="PRO_0000444867" description="Acyl-CoA dehydrogenase AFT10-1">
    <location>
        <begin position="1"/>
        <end position="432"/>
    </location>
</feature>
<keyword id="KW-0274">FAD</keyword>
<keyword id="KW-0285">Flavoprotein</keyword>
<keyword id="KW-0560">Oxidoreductase</keyword>
<keyword id="KW-0843">Virulence</keyword>
<evidence type="ECO:0000255" key="1">
    <source>
        <dbReference type="RuleBase" id="RU362125"/>
    </source>
</evidence>
<evidence type="ECO:0000269" key="2">
    <source>
    </source>
</evidence>
<evidence type="ECO:0000269" key="3">
    <source>
    </source>
</evidence>
<evidence type="ECO:0000269" key="4">
    <source>
    </source>
</evidence>
<evidence type="ECO:0000269" key="5">
    <source ref="1"/>
</evidence>
<evidence type="ECO:0000303" key="6">
    <source>
    </source>
</evidence>
<evidence type="ECO:0000303" key="7">
    <source ref="1"/>
</evidence>
<evidence type="ECO:0000305" key="8"/>
<evidence type="ECO:0000305" key="9">
    <source ref="1"/>
</evidence>
<reference key="1">
    <citation type="journal article" date="2005" name="J. Gen. Plant Pathol.">
        <title>Structural analysis of cosmid clone pcAFT-2 carrying AFT10-1 encoding an acyl-CoA dehydrogenase involved in AF-toxin production in the strawberry pathotype of Alternaria alternata.</title>
        <authorList>
            <person name="Ruswandi S."/>
            <person name="Kitani K."/>
            <person name="Akimitsu K."/>
            <person name="Tsuge T."/>
            <person name="Shiraishi T."/>
            <person name="Yamamoto M."/>
        </authorList>
    </citation>
    <scope>NUCLEOTIDE SEQUENCE [GENOMIC DNA]</scope>
    <scope>FUNCTION</scope>
    <scope>DISRUPTION PHENOTYPE</scope>
    <scope>PATHWAY</scope>
    <source>
        <strain>NAF8</strain>
    </source>
</reference>
<reference key="2">
    <citation type="journal article" date="2002" name="Genetics">
        <title>A conditionally dispensable chromosome controls host-specific pathogenicity in the fungal plant pathogen Alternaria alternata.</title>
        <authorList>
            <person name="Hatta R."/>
            <person name="Ito K."/>
            <person name="Hosaki Y."/>
            <person name="Tanaka T."/>
            <person name="Tanaka A."/>
            <person name="Yamamoto M."/>
            <person name="Akimitsu K."/>
            <person name="Tsuge T."/>
        </authorList>
    </citation>
    <scope>FUNCTION</scope>
    <source>
        <strain>NAF8</strain>
    </source>
</reference>
<reference key="3">
    <citation type="journal article" date="2004" name="Mol. Microbiol.">
        <title>Dissection of the host range of the fungal plant pathogen Alternaria alternata by modification of secondary metabolism.</title>
        <authorList>
            <person name="Ito K."/>
            <person name="Tanaka T."/>
            <person name="Hatta R."/>
            <person name="Yamamoto M."/>
            <person name="Akimitsu K."/>
            <person name="Tsuge T."/>
        </authorList>
    </citation>
    <scope>FUNCTION</scope>
    <source>
        <strain>NAF8</strain>
    </source>
</reference>
<reference key="4">
    <citation type="journal article" date="2008" name="Mol. Plant Microbe Interact.">
        <title>Functional analysis of a multicopy host-selective ACT-toxin biosynthesis gene in the tangerine pathotype of Alternaria alternata using RNA silencing.</title>
        <authorList>
            <person name="Miyamoto Y."/>
            <person name="Masunaka A."/>
            <person name="Tsuge T."/>
            <person name="Yamamoto M."/>
            <person name="Ohtani K."/>
            <person name="Fukumoto T."/>
            <person name="Gomi K."/>
            <person name="Peever T.L."/>
            <person name="Akimitsu K."/>
        </authorList>
    </citation>
    <scope>FUNCTION</scope>
    <source>
        <strain>NAF8</strain>
    </source>
</reference>
<reference key="5">
    <citation type="journal article" date="2013" name="FEMS Microbiol. Rev.">
        <title>Host-selective toxins produced by the plant pathogenic fungus Alternaria alternata.</title>
        <authorList>
            <person name="Tsuge T."/>
            <person name="Harimoto Y."/>
            <person name="Akimitsu K."/>
            <person name="Ohtani K."/>
            <person name="Kodama M."/>
            <person name="Akagi Y."/>
            <person name="Egusa M."/>
            <person name="Yamamoto M."/>
            <person name="Otani H."/>
        </authorList>
    </citation>
    <scope>REVIEW ON HOST-SELECTIVE TOXINS</scope>
</reference>